<sequence length="427" mass="47053">MSTSFENKATNRGIITFTISQDEIKPALDQAFNKVKKDLNVPGFRKGHMPRTVFNQKFGEEALYENALNLVLPKAYEAAVAELGLDVVAQPKIDVVSMEKGQDWKLTAEVVTKPEVKLGDYKDLSVEVDASKEVSDEEVDAKVERERNNLAELTVKDGEAAQGDTVVIDFVGSVDGVEFDGGKGDNFSLELGSGQFIPGFEEQLVGSKAGQTVDVNVTFPEDYQAEDLAGKDAKFVTTIHEVKTKEVPALDDELAKDIDEEVETLDELKAKYRKELESAKEIAFDDAVEGAAIELAVANAEIVELPEEMVHDEVHRAMNEFMGNMQRQGISPEMYFQLTGTTEEDLHKQYQADADKRVKTNLVIEAIAAAEGFEATDEEIEKEITDLASEYNMEADQVRGLLSADMLKHDIAMKKAVDVITSSATVK</sequence>
<comment type="function">
    <text evidence="1">Involved in protein export. Acts as a chaperone by maintaining the newly synthesized protein in an open conformation. Functions as a peptidyl-prolyl cis-trans isomerase.</text>
</comment>
<comment type="catalytic activity">
    <reaction evidence="1">
        <text>[protein]-peptidylproline (omega=180) = [protein]-peptidylproline (omega=0)</text>
        <dbReference type="Rhea" id="RHEA:16237"/>
        <dbReference type="Rhea" id="RHEA-COMP:10747"/>
        <dbReference type="Rhea" id="RHEA-COMP:10748"/>
        <dbReference type="ChEBI" id="CHEBI:83833"/>
        <dbReference type="ChEBI" id="CHEBI:83834"/>
        <dbReference type="EC" id="5.2.1.8"/>
    </reaction>
</comment>
<comment type="subcellular location">
    <subcellularLocation>
        <location>Cytoplasm</location>
    </subcellularLocation>
    <text evidence="1">About half TF is bound to the ribosome near the polypeptide exit tunnel while the other half is free in the cytoplasm.</text>
</comment>
<comment type="domain">
    <text evidence="1">Consists of 3 domains; the N-terminus binds the ribosome, the middle domain has PPIase activity, while the C-terminus has intrinsic chaperone activity on its own.</text>
</comment>
<comment type="similarity">
    <text evidence="1">Belongs to the FKBP-type PPIase family. Tig subfamily.</text>
</comment>
<protein>
    <recommendedName>
        <fullName evidence="1">Trigger factor</fullName>
        <shortName evidence="1">TF</shortName>
        <ecNumber evidence="1">5.2.1.8</ecNumber>
    </recommendedName>
    <alternativeName>
        <fullName evidence="1">PPIase</fullName>
    </alternativeName>
</protein>
<accession>Q3K3S4</accession>
<proteinExistence type="inferred from homology"/>
<feature type="chain" id="PRO_0000256626" description="Trigger factor">
    <location>
        <begin position="1"/>
        <end position="427"/>
    </location>
</feature>
<feature type="domain" description="PPIase FKBP-type" evidence="1">
    <location>
        <begin position="163"/>
        <end position="248"/>
    </location>
</feature>
<name>TIG_STRA1</name>
<dbReference type="EC" id="5.2.1.8" evidence="1"/>
<dbReference type="EMBL" id="CP000114">
    <property type="protein sequence ID" value="ABA46080.1"/>
    <property type="molecule type" value="Genomic_DNA"/>
</dbReference>
<dbReference type="RefSeq" id="WP_000107753.1">
    <property type="nucleotide sequence ID" value="NC_007432.1"/>
</dbReference>
<dbReference type="SMR" id="Q3K3S4"/>
<dbReference type="KEGG" id="sak:SAK_0155"/>
<dbReference type="HOGENOM" id="CLU_033058_3_2_9"/>
<dbReference type="GO" id="GO:0005737">
    <property type="term" value="C:cytoplasm"/>
    <property type="evidence" value="ECO:0007669"/>
    <property type="project" value="UniProtKB-SubCell"/>
</dbReference>
<dbReference type="GO" id="GO:0003755">
    <property type="term" value="F:peptidyl-prolyl cis-trans isomerase activity"/>
    <property type="evidence" value="ECO:0007669"/>
    <property type="project" value="UniProtKB-UniRule"/>
</dbReference>
<dbReference type="GO" id="GO:0044183">
    <property type="term" value="F:protein folding chaperone"/>
    <property type="evidence" value="ECO:0007669"/>
    <property type="project" value="TreeGrafter"/>
</dbReference>
<dbReference type="GO" id="GO:0043022">
    <property type="term" value="F:ribosome binding"/>
    <property type="evidence" value="ECO:0007669"/>
    <property type="project" value="TreeGrafter"/>
</dbReference>
<dbReference type="GO" id="GO:0051083">
    <property type="term" value="P:'de novo' cotranslational protein folding"/>
    <property type="evidence" value="ECO:0007669"/>
    <property type="project" value="TreeGrafter"/>
</dbReference>
<dbReference type="GO" id="GO:0051301">
    <property type="term" value="P:cell division"/>
    <property type="evidence" value="ECO:0007669"/>
    <property type="project" value="UniProtKB-KW"/>
</dbReference>
<dbReference type="GO" id="GO:0061077">
    <property type="term" value="P:chaperone-mediated protein folding"/>
    <property type="evidence" value="ECO:0007669"/>
    <property type="project" value="TreeGrafter"/>
</dbReference>
<dbReference type="GO" id="GO:0015031">
    <property type="term" value="P:protein transport"/>
    <property type="evidence" value="ECO:0007669"/>
    <property type="project" value="UniProtKB-UniRule"/>
</dbReference>
<dbReference type="GO" id="GO:0043335">
    <property type="term" value="P:protein unfolding"/>
    <property type="evidence" value="ECO:0007669"/>
    <property type="project" value="TreeGrafter"/>
</dbReference>
<dbReference type="FunFam" id="3.10.50.40:FF:000001">
    <property type="entry name" value="Trigger factor"/>
    <property type="match status" value="1"/>
</dbReference>
<dbReference type="Gene3D" id="3.10.50.40">
    <property type="match status" value="1"/>
</dbReference>
<dbReference type="Gene3D" id="3.30.70.1050">
    <property type="entry name" value="Trigger factor ribosome-binding domain"/>
    <property type="match status" value="1"/>
</dbReference>
<dbReference type="Gene3D" id="1.10.3120.10">
    <property type="entry name" value="Trigger factor, C-terminal domain"/>
    <property type="match status" value="1"/>
</dbReference>
<dbReference type="HAMAP" id="MF_00303">
    <property type="entry name" value="Trigger_factor_Tig"/>
    <property type="match status" value="1"/>
</dbReference>
<dbReference type="InterPro" id="IPR046357">
    <property type="entry name" value="PPIase_dom_sf"/>
</dbReference>
<dbReference type="InterPro" id="IPR001179">
    <property type="entry name" value="PPIase_FKBP_dom"/>
</dbReference>
<dbReference type="InterPro" id="IPR005215">
    <property type="entry name" value="Trig_fac"/>
</dbReference>
<dbReference type="InterPro" id="IPR008880">
    <property type="entry name" value="Trigger_fac_C"/>
</dbReference>
<dbReference type="InterPro" id="IPR037041">
    <property type="entry name" value="Trigger_fac_C_sf"/>
</dbReference>
<dbReference type="InterPro" id="IPR008881">
    <property type="entry name" value="Trigger_fac_ribosome-bd_bac"/>
</dbReference>
<dbReference type="InterPro" id="IPR036611">
    <property type="entry name" value="Trigger_fac_ribosome-bd_sf"/>
</dbReference>
<dbReference type="InterPro" id="IPR027304">
    <property type="entry name" value="Trigger_fact/SurA_dom_sf"/>
</dbReference>
<dbReference type="NCBIfam" id="TIGR00115">
    <property type="entry name" value="tig"/>
    <property type="match status" value="1"/>
</dbReference>
<dbReference type="PANTHER" id="PTHR30560">
    <property type="entry name" value="TRIGGER FACTOR CHAPERONE AND PEPTIDYL-PROLYL CIS/TRANS ISOMERASE"/>
    <property type="match status" value="1"/>
</dbReference>
<dbReference type="PANTHER" id="PTHR30560:SF3">
    <property type="entry name" value="TRIGGER FACTOR-LIKE PROTEIN TIG, CHLOROPLASTIC"/>
    <property type="match status" value="1"/>
</dbReference>
<dbReference type="Pfam" id="PF00254">
    <property type="entry name" value="FKBP_C"/>
    <property type="match status" value="1"/>
</dbReference>
<dbReference type="Pfam" id="PF05698">
    <property type="entry name" value="Trigger_C"/>
    <property type="match status" value="1"/>
</dbReference>
<dbReference type="Pfam" id="PF05697">
    <property type="entry name" value="Trigger_N"/>
    <property type="match status" value="1"/>
</dbReference>
<dbReference type="PIRSF" id="PIRSF003095">
    <property type="entry name" value="Trigger_factor"/>
    <property type="match status" value="1"/>
</dbReference>
<dbReference type="SUPFAM" id="SSF54534">
    <property type="entry name" value="FKBP-like"/>
    <property type="match status" value="1"/>
</dbReference>
<dbReference type="SUPFAM" id="SSF109998">
    <property type="entry name" value="Triger factor/SurA peptide-binding domain-like"/>
    <property type="match status" value="1"/>
</dbReference>
<dbReference type="SUPFAM" id="SSF102735">
    <property type="entry name" value="Trigger factor ribosome-binding domain"/>
    <property type="match status" value="1"/>
</dbReference>
<dbReference type="PROSITE" id="PS50059">
    <property type="entry name" value="FKBP_PPIASE"/>
    <property type="match status" value="1"/>
</dbReference>
<evidence type="ECO:0000255" key="1">
    <source>
        <dbReference type="HAMAP-Rule" id="MF_00303"/>
    </source>
</evidence>
<gene>
    <name evidence="1" type="primary">tig</name>
    <name type="ordered locus">SAK_0155</name>
</gene>
<organism>
    <name type="scientific">Streptococcus agalactiae serotype Ia (strain ATCC 27591 / A909 / CDC SS700)</name>
    <dbReference type="NCBI Taxonomy" id="205921"/>
    <lineage>
        <taxon>Bacteria</taxon>
        <taxon>Bacillati</taxon>
        <taxon>Bacillota</taxon>
        <taxon>Bacilli</taxon>
        <taxon>Lactobacillales</taxon>
        <taxon>Streptococcaceae</taxon>
        <taxon>Streptococcus</taxon>
    </lineage>
</organism>
<reference key="1">
    <citation type="journal article" date="2005" name="Proc. Natl. Acad. Sci. U.S.A.">
        <title>Genome analysis of multiple pathogenic isolates of Streptococcus agalactiae: implications for the microbial 'pan-genome'.</title>
        <authorList>
            <person name="Tettelin H."/>
            <person name="Masignani V."/>
            <person name="Cieslewicz M.J."/>
            <person name="Donati C."/>
            <person name="Medini D."/>
            <person name="Ward N.L."/>
            <person name="Angiuoli S.V."/>
            <person name="Crabtree J."/>
            <person name="Jones A.L."/>
            <person name="Durkin A.S."/>
            <person name="DeBoy R.T."/>
            <person name="Davidsen T.M."/>
            <person name="Mora M."/>
            <person name="Scarselli M."/>
            <person name="Margarit y Ros I."/>
            <person name="Peterson J.D."/>
            <person name="Hauser C.R."/>
            <person name="Sundaram J.P."/>
            <person name="Nelson W.C."/>
            <person name="Madupu R."/>
            <person name="Brinkac L.M."/>
            <person name="Dodson R.J."/>
            <person name="Rosovitz M.J."/>
            <person name="Sullivan S.A."/>
            <person name="Daugherty S.C."/>
            <person name="Haft D.H."/>
            <person name="Selengut J."/>
            <person name="Gwinn M.L."/>
            <person name="Zhou L."/>
            <person name="Zafar N."/>
            <person name="Khouri H."/>
            <person name="Radune D."/>
            <person name="Dimitrov G."/>
            <person name="Watkins K."/>
            <person name="O'Connor K.J."/>
            <person name="Smith S."/>
            <person name="Utterback T.R."/>
            <person name="White O."/>
            <person name="Rubens C.E."/>
            <person name="Grandi G."/>
            <person name="Madoff L.C."/>
            <person name="Kasper D.L."/>
            <person name="Telford J.L."/>
            <person name="Wessels M.R."/>
            <person name="Rappuoli R."/>
            <person name="Fraser C.M."/>
        </authorList>
    </citation>
    <scope>NUCLEOTIDE SEQUENCE [LARGE SCALE GENOMIC DNA]</scope>
    <source>
        <strain>ATCC 27591 / A909 / CDC SS700</strain>
    </source>
</reference>
<keyword id="KW-0131">Cell cycle</keyword>
<keyword id="KW-0132">Cell division</keyword>
<keyword id="KW-0143">Chaperone</keyword>
<keyword id="KW-0963">Cytoplasm</keyword>
<keyword id="KW-0413">Isomerase</keyword>
<keyword id="KW-0697">Rotamase</keyword>